<name>RIBA_ALISL</name>
<keyword id="KW-0342">GTP-binding</keyword>
<keyword id="KW-0378">Hydrolase</keyword>
<keyword id="KW-0479">Metal-binding</keyword>
<keyword id="KW-0547">Nucleotide-binding</keyword>
<keyword id="KW-0686">Riboflavin biosynthesis</keyword>
<keyword id="KW-0862">Zinc</keyword>
<proteinExistence type="inferred from homology"/>
<gene>
    <name evidence="1" type="primary">ribA</name>
    <name type="ordered locus">VSAL_I1787</name>
</gene>
<dbReference type="EC" id="3.5.4.25" evidence="1"/>
<dbReference type="EMBL" id="FM178379">
    <property type="protein sequence ID" value="CAQ79472.1"/>
    <property type="molecule type" value="Genomic_DNA"/>
</dbReference>
<dbReference type="RefSeq" id="WP_012550375.1">
    <property type="nucleotide sequence ID" value="NC_011312.1"/>
</dbReference>
<dbReference type="SMR" id="B6ENI2"/>
<dbReference type="KEGG" id="vsa:VSAL_I1787"/>
<dbReference type="eggNOG" id="COG0807">
    <property type="taxonomic scope" value="Bacteria"/>
</dbReference>
<dbReference type="HOGENOM" id="CLU_020273_2_1_6"/>
<dbReference type="UniPathway" id="UPA00275">
    <property type="reaction ID" value="UER00400"/>
</dbReference>
<dbReference type="Proteomes" id="UP000001730">
    <property type="component" value="Chromosome 1"/>
</dbReference>
<dbReference type="GO" id="GO:0005829">
    <property type="term" value="C:cytosol"/>
    <property type="evidence" value="ECO:0007669"/>
    <property type="project" value="TreeGrafter"/>
</dbReference>
<dbReference type="GO" id="GO:0005525">
    <property type="term" value="F:GTP binding"/>
    <property type="evidence" value="ECO:0007669"/>
    <property type="project" value="UniProtKB-KW"/>
</dbReference>
<dbReference type="GO" id="GO:0003935">
    <property type="term" value="F:GTP cyclohydrolase II activity"/>
    <property type="evidence" value="ECO:0007669"/>
    <property type="project" value="UniProtKB-UniRule"/>
</dbReference>
<dbReference type="GO" id="GO:0008270">
    <property type="term" value="F:zinc ion binding"/>
    <property type="evidence" value="ECO:0007669"/>
    <property type="project" value="UniProtKB-UniRule"/>
</dbReference>
<dbReference type="GO" id="GO:0009231">
    <property type="term" value="P:riboflavin biosynthetic process"/>
    <property type="evidence" value="ECO:0007669"/>
    <property type="project" value="UniProtKB-UniRule"/>
</dbReference>
<dbReference type="CDD" id="cd00641">
    <property type="entry name" value="GTP_cyclohydro2"/>
    <property type="match status" value="1"/>
</dbReference>
<dbReference type="FunFam" id="3.40.50.10990:FF:000001">
    <property type="entry name" value="Riboflavin biosynthesis protein RibBA"/>
    <property type="match status" value="1"/>
</dbReference>
<dbReference type="Gene3D" id="3.40.50.10990">
    <property type="entry name" value="GTP cyclohydrolase II"/>
    <property type="match status" value="1"/>
</dbReference>
<dbReference type="HAMAP" id="MF_00179">
    <property type="entry name" value="RibA"/>
    <property type="match status" value="1"/>
</dbReference>
<dbReference type="InterPro" id="IPR032677">
    <property type="entry name" value="GTP_cyclohydro_II"/>
</dbReference>
<dbReference type="InterPro" id="IPR000926">
    <property type="entry name" value="RibA"/>
</dbReference>
<dbReference type="InterPro" id="IPR036144">
    <property type="entry name" value="RibA-like_sf"/>
</dbReference>
<dbReference type="NCBIfam" id="NF001591">
    <property type="entry name" value="PRK00393.1"/>
    <property type="match status" value="1"/>
</dbReference>
<dbReference type="PANTHER" id="PTHR21327:SF18">
    <property type="entry name" value="3,4-DIHYDROXY-2-BUTANONE 4-PHOSPHATE SYNTHASE"/>
    <property type="match status" value="1"/>
</dbReference>
<dbReference type="PANTHER" id="PTHR21327">
    <property type="entry name" value="GTP CYCLOHYDROLASE II-RELATED"/>
    <property type="match status" value="1"/>
</dbReference>
<dbReference type="Pfam" id="PF00925">
    <property type="entry name" value="GTP_cyclohydro2"/>
    <property type="match status" value="1"/>
</dbReference>
<dbReference type="SUPFAM" id="SSF142695">
    <property type="entry name" value="RibA-like"/>
    <property type="match status" value="1"/>
</dbReference>
<evidence type="ECO:0000255" key="1">
    <source>
        <dbReference type="HAMAP-Rule" id="MF_00179"/>
    </source>
</evidence>
<reference key="1">
    <citation type="journal article" date="2008" name="BMC Genomics">
        <title>The genome sequence of the fish pathogen Aliivibrio salmonicida strain LFI1238 shows extensive evidence of gene decay.</title>
        <authorList>
            <person name="Hjerde E."/>
            <person name="Lorentzen M.S."/>
            <person name="Holden M.T."/>
            <person name="Seeger K."/>
            <person name="Paulsen S."/>
            <person name="Bason N."/>
            <person name="Churcher C."/>
            <person name="Harris D."/>
            <person name="Norbertczak H."/>
            <person name="Quail M.A."/>
            <person name="Sanders S."/>
            <person name="Thurston S."/>
            <person name="Parkhill J."/>
            <person name="Willassen N.P."/>
            <person name="Thomson N.R."/>
        </authorList>
    </citation>
    <scope>NUCLEOTIDE SEQUENCE [LARGE SCALE GENOMIC DNA]</scope>
    <source>
        <strain>LFI1238</strain>
    </source>
</reference>
<accession>B6ENI2</accession>
<organism>
    <name type="scientific">Aliivibrio salmonicida (strain LFI1238)</name>
    <name type="common">Vibrio salmonicida (strain LFI1238)</name>
    <dbReference type="NCBI Taxonomy" id="316275"/>
    <lineage>
        <taxon>Bacteria</taxon>
        <taxon>Pseudomonadati</taxon>
        <taxon>Pseudomonadota</taxon>
        <taxon>Gammaproteobacteria</taxon>
        <taxon>Vibrionales</taxon>
        <taxon>Vibrionaceae</taxon>
        <taxon>Aliivibrio</taxon>
    </lineage>
</organism>
<comment type="function">
    <text evidence="1">Catalyzes the conversion of GTP to 2,5-diamino-6-ribosylamino-4(3H)-pyrimidinone 5'-phosphate (DARP), formate and pyrophosphate.</text>
</comment>
<comment type="catalytic activity">
    <reaction evidence="1">
        <text>GTP + 4 H2O = 2,5-diamino-6-hydroxy-4-(5-phosphoribosylamino)-pyrimidine + formate + 2 phosphate + 3 H(+)</text>
        <dbReference type="Rhea" id="RHEA:23704"/>
        <dbReference type="ChEBI" id="CHEBI:15377"/>
        <dbReference type="ChEBI" id="CHEBI:15378"/>
        <dbReference type="ChEBI" id="CHEBI:15740"/>
        <dbReference type="ChEBI" id="CHEBI:37565"/>
        <dbReference type="ChEBI" id="CHEBI:43474"/>
        <dbReference type="ChEBI" id="CHEBI:58614"/>
        <dbReference type="EC" id="3.5.4.25"/>
    </reaction>
</comment>
<comment type="cofactor">
    <cofactor evidence="1">
        <name>Zn(2+)</name>
        <dbReference type="ChEBI" id="CHEBI:29105"/>
    </cofactor>
    <text evidence="1">Binds 1 zinc ion per subunit.</text>
</comment>
<comment type="pathway">
    <text evidence="1">Cofactor biosynthesis; riboflavin biosynthesis; 5-amino-6-(D-ribitylamino)uracil from GTP: step 1/4.</text>
</comment>
<comment type="similarity">
    <text evidence="1">Belongs to the GTP cyclohydrolase II family.</text>
</comment>
<sequence>MTKVRARIELSVGQHSNIPAEMLSFEGLETEKEHVAIVFNQADKTQKTPLVRMHSECLTGDVFHSSRCDCGEQLEESINKMAISGGIILYLRQEGRGIGLYNKLDAYELQSKGMNTYEANNHLGFGDDLRDFKEAAQMLGALNINTIKLVTNNPKKIKDIQDYGITLDEVVHTHAHVKKGNENYLQSKVDHGHQLDLDK</sequence>
<protein>
    <recommendedName>
        <fullName evidence="1">GTP cyclohydrolase-2</fullName>
        <ecNumber evidence="1">3.5.4.25</ecNumber>
    </recommendedName>
    <alternativeName>
        <fullName evidence="1">GTP cyclohydrolase II</fullName>
    </alternativeName>
</protein>
<feature type="chain" id="PRO_1000098263" description="GTP cyclohydrolase-2">
    <location>
        <begin position="1"/>
        <end position="199"/>
    </location>
</feature>
<feature type="active site" description="Proton acceptor" evidence="1">
    <location>
        <position position="128"/>
    </location>
</feature>
<feature type="active site" description="Nucleophile" evidence="1">
    <location>
        <position position="130"/>
    </location>
</feature>
<feature type="binding site" evidence="1">
    <location>
        <begin position="52"/>
        <end position="56"/>
    </location>
    <ligand>
        <name>GTP</name>
        <dbReference type="ChEBI" id="CHEBI:37565"/>
    </ligand>
</feature>
<feature type="binding site" evidence="1">
    <location>
        <position position="57"/>
    </location>
    <ligand>
        <name>Zn(2+)</name>
        <dbReference type="ChEBI" id="CHEBI:29105"/>
        <note>catalytic</note>
    </ligand>
</feature>
<feature type="binding site" evidence="1">
    <location>
        <position position="68"/>
    </location>
    <ligand>
        <name>Zn(2+)</name>
        <dbReference type="ChEBI" id="CHEBI:29105"/>
        <note>catalytic</note>
    </ligand>
</feature>
<feature type="binding site" evidence="1">
    <location>
        <position position="70"/>
    </location>
    <ligand>
        <name>Zn(2+)</name>
        <dbReference type="ChEBI" id="CHEBI:29105"/>
        <note>catalytic</note>
    </ligand>
</feature>
<feature type="binding site" evidence="1">
    <location>
        <position position="73"/>
    </location>
    <ligand>
        <name>GTP</name>
        <dbReference type="ChEBI" id="CHEBI:37565"/>
    </ligand>
</feature>
<feature type="binding site" evidence="1">
    <location>
        <begin position="94"/>
        <end position="96"/>
    </location>
    <ligand>
        <name>GTP</name>
        <dbReference type="ChEBI" id="CHEBI:37565"/>
    </ligand>
</feature>
<feature type="binding site" evidence="1">
    <location>
        <position position="116"/>
    </location>
    <ligand>
        <name>GTP</name>
        <dbReference type="ChEBI" id="CHEBI:37565"/>
    </ligand>
</feature>
<feature type="binding site" evidence="1">
    <location>
        <position position="151"/>
    </location>
    <ligand>
        <name>GTP</name>
        <dbReference type="ChEBI" id="CHEBI:37565"/>
    </ligand>
</feature>
<feature type="binding site" evidence="1">
    <location>
        <position position="156"/>
    </location>
    <ligand>
        <name>GTP</name>
        <dbReference type="ChEBI" id="CHEBI:37565"/>
    </ligand>
</feature>